<protein>
    <recommendedName>
        <fullName evidence="1">Large ribosomal subunit protein uL3</fullName>
    </recommendedName>
    <alternativeName>
        <fullName evidence="3">50S ribosomal protein L3</fullName>
    </alternativeName>
</protein>
<sequence length="209" mass="22292">MIGLVGKKVGMTRIFTEDGVSIPVTVIEIEANRVTQVKSLENDGYRAVQVTTGAKKANRVTKPEAGHFAKAGVEAGRGLWEFRLPEGQEFTAGQEISVEIFADVKKVDVTGTSKGKGFAGTVKRWNFRTQDATHGNSLSHRVPGSIGQNQTPGKVFKGKKMAGHMGDERVTVQSLDVVRVDAERNLLLVKGAVPGATGGNLIVKPAVKA</sequence>
<gene>
    <name evidence="1" type="primary">rplC</name>
    <name type="ordered locus">YPO0210</name>
    <name type="ordered locus">y3990</name>
    <name type="ordered locus">YP_0207</name>
</gene>
<reference key="1">
    <citation type="journal article" date="2001" name="Nature">
        <title>Genome sequence of Yersinia pestis, the causative agent of plague.</title>
        <authorList>
            <person name="Parkhill J."/>
            <person name="Wren B.W."/>
            <person name="Thomson N.R."/>
            <person name="Titball R.W."/>
            <person name="Holden M.T.G."/>
            <person name="Prentice M.B."/>
            <person name="Sebaihia M."/>
            <person name="James K.D."/>
            <person name="Churcher C.M."/>
            <person name="Mungall K.L."/>
            <person name="Baker S."/>
            <person name="Basham D."/>
            <person name="Bentley S.D."/>
            <person name="Brooks K."/>
            <person name="Cerdeno-Tarraga A.-M."/>
            <person name="Chillingworth T."/>
            <person name="Cronin A."/>
            <person name="Davies R.M."/>
            <person name="Davis P."/>
            <person name="Dougan G."/>
            <person name="Feltwell T."/>
            <person name="Hamlin N."/>
            <person name="Holroyd S."/>
            <person name="Jagels K."/>
            <person name="Karlyshev A.V."/>
            <person name="Leather S."/>
            <person name="Moule S."/>
            <person name="Oyston P.C.F."/>
            <person name="Quail M.A."/>
            <person name="Rutherford K.M."/>
            <person name="Simmonds M."/>
            <person name="Skelton J."/>
            <person name="Stevens K."/>
            <person name="Whitehead S."/>
            <person name="Barrell B.G."/>
        </authorList>
    </citation>
    <scope>NUCLEOTIDE SEQUENCE [LARGE SCALE GENOMIC DNA]</scope>
    <source>
        <strain>CO-92 / Biovar Orientalis</strain>
    </source>
</reference>
<reference key="2">
    <citation type="journal article" date="2002" name="J. Bacteriol.">
        <title>Genome sequence of Yersinia pestis KIM.</title>
        <authorList>
            <person name="Deng W."/>
            <person name="Burland V."/>
            <person name="Plunkett G. III"/>
            <person name="Boutin A."/>
            <person name="Mayhew G.F."/>
            <person name="Liss P."/>
            <person name="Perna N.T."/>
            <person name="Rose D.J."/>
            <person name="Mau B."/>
            <person name="Zhou S."/>
            <person name="Schwartz D.C."/>
            <person name="Fetherston J.D."/>
            <person name="Lindler L.E."/>
            <person name="Brubaker R.R."/>
            <person name="Plano G.V."/>
            <person name="Straley S.C."/>
            <person name="McDonough K.A."/>
            <person name="Nilles M.L."/>
            <person name="Matson J.S."/>
            <person name="Blattner F.R."/>
            <person name="Perry R.D."/>
        </authorList>
    </citation>
    <scope>NUCLEOTIDE SEQUENCE [LARGE SCALE GENOMIC DNA]</scope>
    <source>
        <strain>KIM10+ / Biovar Mediaevalis</strain>
    </source>
</reference>
<reference key="3">
    <citation type="journal article" date="2004" name="DNA Res.">
        <title>Complete genome sequence of Yersinia pestis strain 91001, an isolate avirulent to humans.</title>
        <authorList>
            <person name="Song Y."/>
            <person name="Tong Z."/>
            <person name="Wang J."/>
            <person name="Wang L."/>
            <person name="Guo Z."/>
            <person name="Han Y."/>
            <person name="Zhang J."/>
            <person name="Pei D."/>
            <person name="Zhou D."/>
            <person name="Qin H."/>
            <person name="Pang X."/>
            <person name="Han Y."/>
            <person name="Zhai J."/>
            <person name="Li M."/>
            <person name="Cui B."/>
            <person name="Qi Z."/>
            <person name="Jin L."/>
            <person name="Dai R."/>
            <person name="Chen F."/>
            <person name="Li S."/>
            <person name="Ye C."/>
            <person name="Du Z."/>
            <person name="Lin W."/>
            <person name="Wang J."/>
            <person name="Yu J."/>
            <person name="Yang H."/>
            <person name="Wang J."/>
            <person name="Huang P."/>
            <person name="Yang R."/>
        </authorList>
    </citation>
    <scope>NUCLEOTIDE SEQUENCE [LARGE SCALE GENOMIC DNA]</scope>
    <source>
        <strain>91001 / Biovar Mediaevalis</strain>
    </source>
</reference>
<dbReference type="EMBL" id="AL590842">
    <property type="protein sequence ID" value="CAL18892.1"/>
    <property type="molecule type" value="Genomic_DNA"/>
</dbReference>
<dbReference type="EMBL" id="AE009952">
    <property type="protein sequence ID" value="AAM87534.1"/>
    <property type="molecule type" value="Genomic_DNA"/>
</dbReference>
<dbReference type="EMBL" id="AE017042">
    <property type="protein sequence ID" value="AAS60483.1"/>
    <property type="molecule type" value="Genomic_DNA"/>
</dbReference>
<dbReference type="PIR" id="AB0026">
    <property type="entry name" value="AB0026"/>
</dbReference>
<dbReference type="RefSeq" id="WP_002218932.1">
    <property type="nucleotide sequence ID" value="NZ_WUCM01000078.1"/>
</dbReference>
<dbReference type="RefSeq" id="YP_002345290.1">
    <property type="nucleotide sequence ID" value="NC_003143.1"/>
</dbReference>
<dbReference type="SMR" id="Q8ZJA9"/>
<dbReference type="STRING" id="214092.YPO0210"/>
<dbReference type="PaxDb" id="214092-YPO0210"/>
<dbReference type="DNASU" id="1148937"/>
<dbReference type="EnsemblBacteria" id="AAS60483">
    <property type="protein sequence ID" value="AAS60483"/>
    <property type="gene ID" value="YP_0207"/>
</dbReference>
<dbReference type="GeneID" id="96663196"/>
<dbReference type="KEGG" id="ype:YPO0210"/>
<dbReference type="KEGG" id="ypk:y3990"/>
<dbReference type="KEGG" id="ypm:YP_0207"/>
<dbReference type="PATRIC" id="fig|214092.21.peg.439"/>
<dbReference type="eggNOG" id="COG0087">
    <property type="taxonomic scope" value="Bacteria"/>
</dbReference>
<dbReference type="HOGENOM" id="CLU_044142_4_1_6"/>
<dbReference type="OMA" id="GKNIPCT"/>
<dbReference type="OrthoDB" id="9806135at2"/>
<dbReference type="Proteomes" id="UP000000815">
    <property type="component" value="Chromosome"/>
</dbReference>
<dbReference type="Proteomes" id="UP000001019">
    <property type="component" value="Chromosome"/>
</dbReference>
<dbReference type="Proteomes" id="UP000002490">
    <property type="component" value="Chromosome"/>
</dbReference>
<dbReference type="GO" id="GO:0022625">
    <property type="term" value="C:cytosolic large ribosomal subunit"/>
    <property type="evidence" value="ECO:0000318"/>
    <property type="project" value="GO_Central"/>
</dbReference>
<dbReference type="GO" id="GO:0019843">
    <property type="term" value="F:rRNA binding"/>
    <property type="evidence" value="ECO:0007669"/>
    <property type="project" value="UniProtKB-UniRule"/>
</dbReference>
<dbReference type="GO" id="GO:0003735">
    <property type="term" value="F:structural constituent of ribosome"/>
    <property type="evidence" value="ECO:0000318"/>
    <property type="project" value="GO_Central"/>
</dbReference>
<dbReference type="GO" id="GO:0006412">
    <property type="term" value="P:translation"/>
    <property type="evidence" value="ECO:0007669"/>
    <property type="project" value="UniProtKB-UniRule"/>
</dbReference>
<dbReference type="FunFam" id="2.40.30.10:FF:000004">
    <property type="entry name" value="50S ribosomal protein L3"/>
    <property type="match status" value="1"/>
</dbReference>
<dbReference type="FunFam" id="3.30.160.810:FF:000001">
    <property type="entry name" value="50S ribosomal protein L3"/>
    <property type="match status" value="1"/>
</dbReference>
<dbReference type="Gene3D" id="3.30.160.810">
    <property type="match status" value="1"/>
</dbReference>
<dbReference type="Gene3D" id="2.40.30.10">
    <property type="entry name" value="Translation factors"/>
    <property type="match status" value="1"/>
</dbReference>
<dbReference type="HAMAP" id="MF_01325_B">
    <property type="entry name" value="Ribosomal_uL3_B"/>
    <property type="match status" value="1"/>
</dbReference>
<dbReference type="InterPro" id="IPR000597">
    <property type="entry name" value="Ribosomal_uL3"/>
</dbReference>
<dbReference type="InterPro" id="IPR019927">
    <property type="entry name" value="Ribosomal_uL3_bac/org-type"/>
</dbReference>
<dbReference type="InterPro" id="IPR019926">
    <property type="entry name" value="Ribosomal_uL3_CS"/>
</dbReference>
<dbReference type="InterPro" id="IPR009000">
    <property type="entry name" value="Transl_B-barrel_sf"/>
</dbReference>
<dbReference type="NCBIfam" id="TIGR03625">
    <property type="entry name" value="L3_bact"/>
    <property type="match status" value="1"/>
</dbReference>
<dbReference type="PANTHER" id="PTHR11229">
    <property type="entry name" value="50S RIBOSOMAL PROTEIN L3"/>
    <property type="match status" value="1"/>
</dbReference>
<dbReference type="PANTHER" id="PTHR11229:SF16">
    <property type="entry name" value="LARGE RIBOSOMAL SUBUNIT PROTEIN UL3C"/>
    <property type="match status" value="1"/>
</dbReference>
<dbReference type="Pfam" id="PF00297">
    <property type="entry name" value="Ribosomal_L3"/>
    <property type="match status" value="1"/>
</dbReference>
<dbReference type="SUPFAM" id="SSF50447">
    <property type="entry name" value="Translation proteins"/>
    <property type="match status" value="1"/>
</dbReference>
<dbReference type="PROSITE" id="PS00474">
    <property type="entry name" value="RIBOSOMAL_L3"/>
    <property type="match status" value="1"/>
</dbReference>
<proteinExistence type="inferred from homology"/>
<name>RL3_YERPE</name>
<keyword id="KW-0488">Methylation</keyword>
<keyword id="KW-1185">Reference proteome</keyword>
<keyword id="KW-0687">Ribonucleoprotein</keyword>
<keyword id="KW-0689">Ribosomal protein</keyword>
<keyword id="KW-0694">RNA-binding</keyword>
<keyword id="KW-0699">rRNA-binding</keyword>
<organism>
    <name type="scientific">Yersinia pestis</name>
    <dbReference type="NCBI Taxonomy" id="632"/>
    <lineage>
        <taxon>Bacteria</taxon>
        <taxon>Pseudomonadati</taxon>
        <taxon>Pseudomonadota</taxon>
        <taxon>Gammaproteobacteria</taxon>
        <taxon>Enterobacterales</taxon>
        <taxon>Yersiniaceae</taxon>
        <taxon>Yersinia</taxon>
    </lineage>
</organism>
<feature type="chain" id="PRO_0000077196" description="Large ribosomal subunit protein uL3">
    <location>
        <begin position="1"/>
        <end position="209"/>
    </location>
</feature>
<feature type="region of interest" description="Disordered" evidence="2">
    <location>
        <begin position="133"/>
        <end position="152"/>
    </location>
</feature>
<feature type="modified residue" description="N5-methylglutamine" evidence="1">
    <location>
        <position position="150"/>
    </location>
</feature>
<accession>Q8ZJA9</accession>
<accession>Q0WK98</accession>
<comment type="function">
    <text evidence="1">One of the primary rRNA binding proteins, it binds directly near the 3'-end of the 23S rRNA, where it nucleates assembly of the 50S subunit.</text>
</comment>
<comment type="subunit">
    <text evidence="1">Part of the 50S ribosomal subunit. Forms a cluster with proteins L14 and L19.</text>
</comment>
<comment type="PTM">
    <text evidence="1">Methylated by PrmB.</text>
</comment>
<comment type="similarity">
    <text evidence="1">Belongs to the universal ribosomal protein uL3 family.</text>
</comment>
<evidence type="ECO:0000255" key="1">
    <source>
        <dbReference type="HAMAP-Rule" id="MF_01325"/>
    </source>
</evidence>
<evidence type="ECO:0000256" key="2">
    <source>
        <dbReference type="SAM" id="MobiDB-lite"/>
    </source>
</evidence>
<evidence type="ECO:0000305" key="3"/>